<name>GRPE_GEOTN</name>
<comment type="function">
    <text evidence="1">Participates actively in the response to hyperosmotic and heat shock by preventing the aggregation of stress-denatured proteins, in association with DnaK and GrpE. It is the nucleotide exchange factor for DnaK and may function as a thermosensor. Unfolded proteins bind initially to DnaJ; upon interaction with the DnaJ-bound protein, DnaK hydrolyzes its bound ATP, resulting in the formation of a stable complex. GrpE releases ADP from DnaK; ATP binding to DnaK triggers the release of the substrate protein, thus completing the reaction cycle. Several rounds of ATP-dependent interactions between DnaJ, DnaK and GrpE are required for fully efficient folding.</text>
</comment>
<comment type="subunit">
    <text evidence="1">Homodimer.</text>
</comment>
<comment type="subcellular location">
    <subcellularLocation>
        <location evidence="1">Cytoplasm</location>
    </subcellularLocation>
</comment>
<comment type="similarity">
    <text evidence="1">Belongs to the GrpE family.</text>
</comment>
<sequence length="220" mass="24611">MEQGDKQATYNELETEQPVSKEGADSQPEDEAIGAASEHADAQAGENPEAASTTADPAEQTSVEAEELAKAKAQVAELEEKLAEMEKRYLRLYADFENFRRRARQEMEAAEKYRAQSLASDLLPVLDNFERALKIETENEQAKSILQGVEMVYRSLLDALRKEGVEVIEAVGKPFDPHLHQAVMQTDEGGYEPNTVVEELQKGYKLKDRILRPAMVKVSQ</sequence>
<proteinExistence type="inferred from homology"/>
<feature type="chain" id="PRO_1000053587" description="Protein GrpE">
    <location>
        <begin position="1"/>
        <end position="220"/>
    </location>
</feature>
<feature type="region of interest" description="Disordered" evidence="2">
    <location>
        <begin position="1"/>
        <end position="67"/>
    </location>
</feature>
<feature type="compositionally biased region" description="Polar residues" evidence="2">
    <location>
        <begin position="1"/>
        <end position="12"/>
    </location>
</feature>
<feature type="compositionally biased region" description="Polar residues" evidence="2">
    <location>
        <begin position="50"/>
        <end position="63"/>
    </location>
</feature>
<accession>A4IR32</accession>
<organism>
    <name type="scientific">Geobacillus thermodenitrificans (strain NG80-2)</name>
    <dbReference type="NCBI Taxonomy" id="420246"/>
    <lineage>
        <taxon>Bacteria</taxon>
        <taxon>Bacillati</taxon>
        <taxon>Bacillota</taxon>
        <taxon>Bacilli</taxon>
        <taxon>Bacillales</taxon>
        <taxon>Anoxybacillaceae</taxon>
        <taxon>Geobacillus</taxon>
    </lineage>
</organism>
<protein>
    <recommendedName>
        <fullName evidence="1">Protein GrpE</fullName>
    </recommendedName>
    <alternativeName>
        <fullName evidence="1">HSP-70 cofactor</fullName>
    </alternativeName>
</protein>
<evidence type="ECO:0000255" key="1">
    <source>
        <dbReference type="HAMAP-Rule" id="MF_01151"/>
    </source>
</evidence>
<evidence type="ECO:0000256" key="2">
    <source>
        <dbReference type="SAM" id="MobiDB-lite"/>
    </source>
</evidence>
<gene>
    <name evidence="1" type="primary">grpE</name>
    <name type="ordered locus">GTNG_2441</name>
</gene>
<keyword id="KW-0143">Chaperone</keyword>
<keyword id="KW-0963">Cytoplasm</keyword>
<keyword id="KW-0346">Stress response</keyword>
<reference key="1">
    <citation type="journal article" date="2007" name="Proc. Natl. Acad. Sci. U.S.A.">
        <title>Genome and proteome of long-chain alkane degrading Geobacillus thermodenitrificans NG80-2 isolated from a deep-subsurface oil reservoir.</title>
        <authorList>
            <person name="Feng L."/>
            <person name="Wang W."/>
            <person name="Cheng J."/>
            <person name="Ren Y."/>
            <person name="Zhao G."/>
            <person name="Gao C."/>
            <person name="Tang Y."/>
            <person name="Liu X."/>
            <person name="Han W."/>
            <person name="Peng X."/>
            <person name="Liu R."/>
            <person name="Wang L."/>
        </authorList>
    </citation>
    <scope>NUCLEOTIDE SEQUENCE [LARGE SCALE GENOMIC DNA]</scope>
    <source>
        <strain>NG80-2</strain>
    </source>
</reference>
<dbReference type="EMBL" id="CP000557">
    <property type="protein sequence ID" value="ABO67786.1"/>
    <property type="molecule type" value="Genomic_DNA"/>
</dbReference>
<dbReference type="RefSeq" id="WP_008879920.1">
    <property type="nucleotide sequence ID" value="NC_009328.1"/>
</dbReference>
<dbReference type="SMR" id="A4IR32"/>
<dbReference type="GeneID" id="87623411"/>
<dbReference type="KEGG" id="gtn:GTNG_2441"/>
<dbReference type="eggNOG" id="COG0576">
    <property type="taxonomic scope" value="Bacteria"/>
</dbReference>
<dbReference type="HOGENOM" id="CLU_057217_5_2_9"/>
<dbReference type="Proteomes" id="UP000001578">
    <property type="component" value="Chromosome"/>
</dbReference>
<dbReference type="GO" id="GO:0005737">
    <property type="term" value="C:cytoplasm"/>
    <property type="evidence" value="ECO:0007669"/>
    <property type="project" value="UniProtKB-SubCell"/>
</dbReference>
<dbReference type="GO" id="GO:0000774">
    <property type="term" value="F:adenyl-nucleotide exchange factor activity"/>
    <property type="evidence" value="ECO:0007669"/>
    <property type="project" value="InterPro"/>
</dbReference>
<dbReference type="GO" id="GO:0042803">
    <property type="term" value="F:protein homodimerization activity"/>
    <property type="evidence" value="ECO:0007669"/>
    <property type="project" value="InterPro"/>
</dbReference>
<dbReference type="GO" id="GO:0051087">
    <property type="term" value="F:protein-folding chaperone binding"/>
    <property type="evidence" value="ECO:0007669"/>
    <property type="project" value="InterPro"/>
</dbReference>
<dbReference type="GO" id="GO:0051082">
    <property type="term" value="F:unfolded protein binding"/>
    <property type="evidence" value="ECO:0007669"/>
    <property type="project" value="TreeGrafter"/>
</dbReference>
<dbReference type="GO" id="GO:0006457">
    <property type="term" value="P:protein folding"/>
    <property type="evidence" value="ECO:0007669"/>
    <property type="project" value="InterPro"/>
</dbReference>
<dbReference type="CDD" id="cd00446">
    <property type="entry name" value="GrpE"/>
    <property type="match status" value="1"/>
</dbReference>
<dbReference type="FunFam" id="2.30.22.10:FF:000001">
    <property type="entry name" value="Protein GrpE"/>
    <property type="match status" value="1"/>
</dbReference>
<dbReference type="Gene3D" id="3.90.20.20">
    <property type="match status" value="1"/>
</dbReference>
<dbReference type="Gene3D" id="2.30.22.10">
    <property type="entry name" value="Head domain of nucleotide exchange factor GrpE"/>
    <property type="match status" value="1"/>
</dbReference>
<dbReference type="HAMAP" id="MF_01151">
    <property type="entry name" value="GrpE"/>
    <property type="match status" value="1"/>
</dbReference>
<dbReference type="InterPro" id="IPR000740">
    <property type="entry name" value="GrpE"/>
</dbReference>
<dbReference type="InterPro" id="IPR013805">
    <property type="entry name" value="GrpE_coiled_coil"/>
</dbReference>
<dbReference type="InterPro" id="IPR009012">
    <property type="entry name" value="GrpE_head"/>
</dbReference>
<dbReference type="NCBIfam" id="NF010738">
    <property type="entry name" value="PRK14140.1"/>
    <property type="match status" value="1"/>
</dbReference>
<dbReference type="NCBIfam" id="NF010748">
    <property type="entry name" value="PRK14150.1"/>
    <property type="match status" value="1"/>
</dbReference>
<dbReference type="PANTHER" id="PTHR21237">
    <property type="entry name" value="GRPE PROTEIN"/>
    <property type="match status" value="1"/>
</dbReference>
<dbReference type="PANTHER" id="PTHR21237:SF23">
    <property type="entry name" value="GRPE PROTEIN HOMOLOG, MITOCHONDRIAL"/>
    <property type="match status" value="1"/>
</dbReference>
<dbReference type="Pfam" id="PF01025">
    <property type="entry name" value="GrpE"/>
    <property type="match status" value="1"/>
</dbReference>
<dbReference type="PRINTS" id="PR00773">
    <property type="entry name" value="GRPEPROTEIN"/>
</dbReference>
<dbReference type="SUPFAM" id="SSF58014">
    <property type="entry name" value="Coiled-coil domain of nucleotide exchange factor GrpE"/>
    <property type="match status" value="1"/>
</dbReference>
<dbReference type="SUPFAM" id="SSF51064">
    <property type="entry name" value="Head domain of nucleotide exchange factor GrpE"/>
    <property type="match status" value="1"/>
</dbReference>
<dbReference type="PROSITE" id="PS01071">
    <property type="entry name" value="GRPE"/>
    <property type="match status" value="1"/>
</dbReference>